<organism>
    <name type="scientific">Burkholderia cenocepacia (strain HI2424)</name>
    <dbReference type="NCBI Taxonomy" id="331272"/>
    <lineage>
        <taxon>Bacteria</taxon>
        <taxon>Pseudomonadati</taxon>
        <taxon>Pseudomonadota</taxon>
        <taxon>Betaproteobacteria</taxon>
        <taxon>Burkholderiales</taxon>
        <taxon>Burkholderiaceae</taxon>
        <taxon>Burkholderia</taxon>
        <taxon>Burkholderia cepacia complex</taxon>
    </lineage>
</organism>
<feature type="chain" id="PRO_5000165088" description="Acetylglutamate kinase">
    <location>
        <begin position="1"/>
        <end position="299"/>
    </location>
</feature>
<feature type="binding site" evidence="1">
    <location>
        <begin position="72"/>
        <end position="73"/>
    </location>
    <ligand>
        <name>substrate</name>
    </ligand>
</feature>
<feature type="binding site" evidence="1">
    <location>
        <position position="94"/>
    </location>
    <ligand>
        <name>substrate</name>
    </ligand>
</feature>
<feature type="binding site" evidence="1">
    <location>
        <position position="196"/>
    </location>
    <ligand>
        <name>substrate</name>
    </ligand>
</feature>
<feature type="site" description="Transition state stabilizer" evidence="1">
    <location>
        <position position="37"/>
    </location>
</feature>
<feature type="site" description="Transition state stabilizer" evidence="1">
    <location>
        <position position="256"/>
    </location>
</feature>
<gene>
    <name evidence="1" type="primary">argB</name>
    <name type="ordered locus">Bcen2424_3096</name>
</gene>
<reference key="1">
    <citation type="submission" date="2006-08" db="EMBL/GenBank/DDBJ databases">
        <title>Complete sequence of chromosome 1 of Burkholderia cenocepacia HI2424.</title>
        <authorList>
            <person name="Copeland A."/>
            <person name="Lucas S."/>
            <person name="Lapidus A."/>
            <person name="Barry K."/>
            <person name="Detter J.C."/>
            <person name="Glavina del Rio T."/>
            <person name="Hammon N."/>
            <person name="Israni S."/>
            <person name="Pitluck S."/>
            <person name="Chain P."/>
            <person name="Malfatti S."/>
            <person name="Shin M."/>
            <person name="Vergez L."/>
            <person name="Schmutz J."/>
            <person name="Larimer F."/>
            <person name="Land M."/>
            <person name="Hauser L."/>
            <person name="Kyrpides N."/>
            <person name="Kim E."/>
            <person name="LiPuma J.J."/>
            <person name="Gonzalez C.F."/>
            <person name="Konstantinidis K."/>
            <person name="Tiedje J.M."/>
            <person name="Richardson P."/>
        </authorList>
    </citation>
    <scope>NUCLEOTIDE SEQUENCE [LARGE SCALE GENOMIC DNA]</scope>
    <source>
        <strain>HI2424</strain>
    </source>
</reference>
<evidence type="ECO:0000255" key="1">
    <source>
        <dbReference type="HAMAP-Rule" id="MF_00082"/>
    </source>
</evidence>
<evidence type="ECO:0000305" key="2"/>
<keyword id="KW-0028">Amino-acid biosynthesis</keyword>
<keyword id="KW-0055">Arginine biosynthesis</keyword>
<keyword id="KW-0067">ATP-binding</keyword>
<keyword id="KW-0963">Cytoplasm</keyword>
<keyword id="KW-0418">Kinase</keyword>
<keyword id="KW-0547">Nucleotide-binding</keyword>
<keyword id="KW-0808">Transferase</keyword>
<name>ARGB_BURCH</name>
<accession>A0KBG7</accession>
<sequence>MSEPIDLSQIAPTLKAEILAEALPYIRRYHGKTVVIKYGGNAMTEERLKQGFARDVILLKLVGINPVIVHGGGPQIDHALKKIGKAGTFIQGMRVTDEETMEVVEWVLGGEVQQDIVMLINHFGGHAVGLTGKDGGLIHARKLLMPDRDNPGQYIDIGQVGEVEAINPAVVKALQDDAFIPVISPIGFGEDGLSYNINADLVAGKLATVLNAEKLLMMTNIPGVMDKDGNLLTDLSAREIDALFEDGTISGGMLPKISSALDAAKSGVKSVHIVDGRIEHSVLLEILTEQPFGTMIRSH</sequence>
<protein>
    <recommendedName>
        <fullName evidence="1">Acetylglutamate kinase</fullName>
        <ecNumber evidence="1">2.7.2.8</ecNumber>
    </recommendedName>
    <alternativeName>
        <fullName evidence="1">N-acetyl-L-glutamate 5-phosphotransferase</fullName>
    </alternativeName>
    <alternativeName>
        <fullName evidence="1">NAG kinase</fullName>
        <shortName evidence="1">NAGK</shortName>
    </alternativeName>
</protein>
<comment type="function">
    <text evidence="1">Catalyzes the ATP-dependent phosphorylation of N-acetyl-L-glutamate.</text>
</comment>
<comment type="catalytic activity">
    <reaction evidence="1">
        <text>N-acetyl-L-glutamate + ATP = N-acetyl-L-glutamyl 5-phosphate + ADP</text>
        <dbReference type="Rhea" id="RHEA:14629"/>
        <dbReference type="ChEBI" id="CHEBI:30616"/>
        <dbReference type="ChEBI" id="CHEBI:44337"/>
        <dbReference type="ChEBI" id="CHEBI:57936"/>
        <dbReference type="ChEBI" id="CHEBI:456216"/>
        <dbReference type="EC" id="2.7.2.8"/>
    </reaction>
</comment>
<comment type="pathway">
    <text evidence="1">Amino-acid biosynthesis; L-arginine biosynthesis; N(2)-acetyl-L-ornithine from L-glutamate: step 2/4.</text>
</comment>
<comment type="subcellular location">
    <subcellularLocation>
        <location evidence="1">Cytoplasm</location>
    </subcellularLocation>
</comment>
<comment type="similarity">
    <text evidence="1">Belongs to the acetylglutamate kinase family. ArgB subfamily.</text>
</comment>
<comment type="sequence caution" evidence="2">
    <conflict type="erroneous initiation">
        <sequence resource="EMBL-CDS" id="ABK09844"/>
    </conflict>
</comment>
<dbReference type="EC" id="2.7.2.8" evidence="1"/>
<dbReference type="EMBL" id="CP000458">
    <property type="protein sequence ID" value="ABK09844.1"/>
    <property type="status" value="ALT_INIT"/>
    <property type="molecule type" value="Genomic_DNA"/>
</dbReference>
<dbReference type="RefSeq" id="WP_006490510.1">
    <property type="nucleotide sequence ID" value="NC_008542.1"/>
</dbReference>
<dbReference type="SMR" id="A0KBG7"/>
<dbReference type="GeneID" id="98103597"/>
<dbReference type="KEGG" id="bch:Bcen2424_3096"/>
<dbReference type="HOGENOM" id="CLU_053680_0_0_4"/>
<dbReference type="UniPathway" id="UPA00068">
    <property type="reaction ID" value="UER00107"/>
</dbReference>
<dbReference type="GO" id="GO:0005737">
    <property type="term" value="C:cytoplasm"/>
    <property type="evidence" value="ECO:0007669"/>
    <property type="project" value="UniProtKB-SubCell"/>
</dbReference>
<dbReference type="GO" id="GO:0003991">
    <property type="term" value="F:acetylglutamate kinase activity"/>
    <property type="evidence" value="ECO:0007669"/>
    <property type="project" value="UniProtKB-UniRule"/>
</dbReference>
<dbReference type="GO" id="GO:0005524">
    <property type="term" value="F:ATP binding"/>
    <property type="evidence" value="ECO:0007669"/>
    <property type="project" value="UniProtKB-UniRule"/>
</dbReference>
<dbReference type="GO" id="GO:0042450">
    <property type="term" value="P:arginine biosynthetic process via ornithine"/>
    <property type="evidence" value="ECO:0007669"/>
    <property type="project" value="UniProtKB-UniRule"/>
</dbReference>
<dbReference type="GO" id="GO:0006526">
    <property type="term" value="P:L-arginine biosynthetic process"/>
    <property type="evidence" value="ECO:0007669"/>
    <property type="project" value="UniProtKB-UniPathway"/>
</dbReference>
<dbReference type="CDD" id="cd04250">
    <property type="entry name" value="AAK_NAGK-C"/>
    <property type="match status" value="1"/>
</dbReference>
<dbReference type="FunFam" id="3.40.1160.10:FF:000004">
    <property type="entry name" value="Acetylglutamate kinase"/>
    <property type="match status" value="1"/>
</dbReference>
<dbReference type="Gene3D" id="3.40.1160.10">
    <property type="entry name" value="Acetylglutamate kinase-like"/>
    <property type="match status" value="1"/>
</dbReference>
<dbReference type="HAMAP" id="MF_00082">
    <property type="entry name" value="ArgB"/>
    <property type="match status" value="1"/>
</dbReference>
<dbReference type="InterPro" id="IPR036393">
    <property type="entry name" value="AceGlu_kinase-like_sf"/>
</dbReference>
<dbReference type="InterPro" id="IPR004662">
    <property type="entry name" value="AcgluKinase_fam"/>
</dbReference>
<dbReference type="InterPro" id="IPR037528">
    <property type="entry name" value="ArgB"/>
</dbReference>
<dbReference type="InterPro" id="IPR001048">
    <property type="entry name" value="Asp/Glu/Uridylate_kinase"/>
</dbReference>
<dbReference type="InterPro" id="IPR041727">
    <property type="entry name" value="NAGK-C"/>
</dbReference>
<dbReference type="NCBIfam" id="TIGR00761">
    <property type="entry name" value="argB"/>
    <property type="match status" value="1"/>
</dbReference>
<dbReference type="PANTHER" id="PTHR23342">
    <property type="entry name" value="N-ACETYLGLUTAMATE SYNTHASE"/>
    <property type="match status" value="1"/>
</dbReference>
<dbReference type="PANTHER" id="PTHR23342:SF0">
    <property type="entry name" value="N-ACETYLGLUTAMATE SYNTHASE, MITOCHONDRIAL"/>
    <property type="match status" value="1"/>
</dbReference>
<dbReference type="Pfam" id="PF00696">
    <property type="entry name" value="AA_kinase"/>
    <property type="match status" value="1"/>
</dbReference>
<dbReference type="PIRSF" id="PIRSF000728">
    <property type="entry name" value="NAGK"/>
    <property type="match status" value="1"/>
</dbReference>
<dbReference type="SUPFAM" id="SSF53633">
    <property type="entry name" value="Carbamate kinase-like"/>
    <property type="match status" value="1"/>
</dbReference>
<proteinExistence type="inferred from homology"/>